<sequence>MISEVVVTTRKNNRDNKAPIGVYFKDKKVIMHLFSGSHTYENLLTEDYFSVNVVPPIEIAKAVLDDEDDYLYYNDIPYLKSSYYAIFYKVIERKFVDREDKFGKNRLMILEGEEIKRIYLNNIPKPYNRADGLLVEIAVIYSRLANKNIKINEDDKKEMINDIRKYFSIIKKVGGREHKQLAEIMLRNLNLL</sequence>
<organism>
    <name type="scientific">Methanocaldococcus jannaschii (strain ATCC 43067 / DSM 2661 / JAL-1 / JCM 10045 / NBRC 100440)</name>
    <name type="common">Methanococcus jannaschii</name>
    <dbReference type="NCBI Taxonomy" id="243232"/>
    <lineage>
        <taxon>Archaea</taxon>
        <taxon>Methanobacteriati</taxon>
        <taxon>Methanobacteriota</taxon>
        <taxon>Methanomada group</taxon>
        <taxon>Methanococci</taxon>
        <taxon>Methanococcales</taxon>
        <taxon>Methanocaldococcaceae</taxon>
        <taxon>Methanocaldococcus</taxon>
    </lineage>
</organism>
<protein>
    <recommendedName>
        <fullName>Uncharacterized protein MJ1453</fullName>
    </recommendedName>
</protein>
<comment type="similarity">
    <text evidence="1">To M.thermoautotrophicum MTH863.</text>
</comment>
<keyword id="KW-1185">Reference proteome</keyword>
<name>Y1453_METJA</name>
<reference key="1">
    <citation type="journal article" date="1996" name="Science">
        <title>Complete genome sequence of the methanogenic archaeon, Methanococcus jannaschii.</title>
        <authorList>
            <person name="Bult C.J."/>
            <person name="White O."/>
            <person name="Olsen G.J."/>
            <person name="Zhou L."/>
            <person name="Fleischmann R.D."/>
            <person name="Sutton G.G."/>
            <person name="Blake J.A."/>
            <person name="FitzGerald L.M."/>
            <person name="Clayton R.A."/>
            <person name="Gocayne J.D."/>
            <person name="Kerlavage A.R."/>
            <person name="Dougherty B.A."/>
            <person name="Tomb J.-F."/>
            <person name="Adams M.D."/>
            <person name="Reich C.I."/>
            <person name="Overbeek R."/>
            <person name="Kirkness E.F."/>
            <person name="Weinstock K.G."/>
            <person name="Merrick J.M."/>
            <person name="Glodek A."/>
            <person name="Scott J.L."/>
            <person name="Geoghagen N.S.M."/>
            <person name="Weidman J.F."/>
            <person name="Fuhrmann J.L."/>
            <person name="Nguyen D."/>
            <person name="Utterback T.R."/>
            <person name="Kelley J.M."/>
            <person name="Peterson J.D."/>
            <person name="Sadow P.W."/>
            <person name="Hanna M.C."/>
            <person name="Cotton M.D."/>
            <person name="Roberts K.M."/>
            <person name="Hurst M.A."/>
            <person name="Kaine B.P."/>
            <person name="Borodovsky M."/>
            <person name="Klenk H.-P."/>
            <person name="Fraser C.M."/>
            <person name="Smith H.O."/>
            <person name="Woese C.R."/>
            <person name="Venter J.C."/>
        </authorList>
    </citation>
    <scope>NUCLEOTIDE SEQUENCE [LARGE SCALE GENOMIC DNA]</scope>
    <source>
        <strain>ATCC 43067 / DSM 2661 / JAL-1 / JCM 10045 / NBRC 100440</strain>
    </source>
</reference>
<proteinExistence type="predicted"/>
<dbReference type="EMBL" id="L77117">
    <property type="protein sequence ID" value="AAB99468.1"/>
    <property type="molecule type" value="Genomic_DNA"/>
</dbReference>
<dbReference type="PIR" id="D64481">
    <property type="entry name" value="D64481"/>
</dbReference>
<dbReference type="RefSeq" id="WP_010870973.1">
    <property type="nucleotide sequence ID" value="NC_000909.1"/>
</dbReference>
<dbReference type="SMR" id="Q58848"/>
<dbReference type="STRING" id="243232.MJ_1453"/>
<dbReference type="PaxDb" id="243232-MJ_1453"/>
<dbReference type="EnsemblBacteria" id="AAB99468">
    <property type="protein sequence ID" value="AAB99468"/>
    <property type="gene ID" value="MJ_1453"/>
</dbReference>
<dbReference type="GeneID" id="1452357"/>
<dbReference type="KEGG" id="mja:MJ_1453"/>
<dbReference type="eggNOG" id="arCOG04458">
    <property type="taxonomic scope" value="Archaea"/>
</dbReference>
<dbReference type="HOGENOM" id="CLU_100102_0_0_2"/>
<dbReference type="InParanoid" id="Q58848"/>
<dbReference type="OrthoDB" id="146030at2157"/>
<dbReference type="Proteomes" id="UP000000805">
    <property type="component" value="Chromosome"/>
</dbReference>
<dbReference type="Gene3D" id="2.30.110.10">
    <property type="entry name" value="Electron Transport, Fmn-binding Protein, Chain A"/>
    <property type="match status" value="1"/>
</dbReference>
<dbReference type="Gene3D" id="1.20.58.290">
    <property type="entry name" value="Hypothetical membrane protein ta0354_69_121"/>
    <property type="match status" value="1"/>
</dbReference>
<dbReference type="InterPro" id="IPR049288">
    <property type="entry name" value="DUF447_C"/>
</dbReference>
<dbReference type="InterPro" id="IPR007386">
    <property type="entry name" value="DUF447_N"/>
</dbReference>
<dbReference type="InterPro" id="IPR012349">
    <property type="entry name" value="Split_barrel_FMN-bd"/>
</dbReference>
<dbReference type="InterPro" id="IPR016733">
    <property type="entry name" value="UCP018747"/>
</dbReference>
<dbReference type="Pfam" id="PF20766">
    <property type="entry name" value="DUF447_C"/>
    <property type="match status" value="1"/>
</dbReference>
<dbReference type="Pfam" id="PF04289">
    <property type="entry name" value="DUF447_N"/>
    <property type="match status" value="1"/>
</dbReference>
<dbReference type="PIRSF" id="PIRSF018747">
    <property type="entry name" value="UCP018747"/>
    <property type="match status" value="1"/>
</dbReference>
<dbReference type="SUPFAM" id="SSF50475">
    <property type="entry name" value="FMN-binding split barrel"/>
    <property type="match status" value="1"/>
</dbReference>
<feature type="chain" id="PRO_0000107342" description="Uncharacterized protein MJ1453">
    <location>
        <begin position="1"/>
        <end position="192"/>
    </location>
</feature>
<evidence type="ECO:0000305" key="1"/>
<accession>Q58848</accession>
<gene>
    <name type="ordered locus">MJ1453</name>
</gene>